<proteinExistence type="inferred from homology"/>
<organism>
    <name type="scientific">Granulibacter bethesdensis (strain ATCC BAA-1260 / CGDNIH1)</name>
    <dbReference type="NCBI Taxonomy" id="391165"/>
    <lineage>
        <taxon>Bacteria</taxon>
        <taxon>Pseudomonadati</taxon>
        <taxon>Pseudomonadota</taxon>
        <taxon>Alphaproteobacteria</taxon>
        <taxon>Acetobacterales</taxon>
        <taxon>Acetobacteraceae</taxon>
        <taxon>Granulibacter</taxon>
    </lineage>
</organism>
<keyword id="KW-0067">ATP-binding</keyword>
<keyword id="KW-0997">Cell inner membrane</keyword>
<keyword id="KW-1003">Cell membrane</keyword>
<keyword id="KW-0472">Membrane</keyword>
<keyword id="KW-0547">Nucleotide-binding</keyword>
<keyword id="KW-0592">Phosphate transport</keyword>
<keyword id="KW-1185">Reference proteome</keyword>
<keyword id="KW-1278">Translocase</keyword>
<keyword id="KW-0813">Transport</keyword>
<dbReference type="EC" id="7.3.2.1" evidence="1"/>
<dbReference type="EMBL" id="CP000394">
    <property type="protein sequence ID" value="ABI61811.1"/>
    <property type="molecule type" value="Genomic_DNA"/>
</dbReference>
<dbReference type="SMR" id="Q0BTP1"/>
<dbReference type="STRING" id="391165.GbCGDNIH1_0913"/>
<dbReference type="KEGG" id="gbe:GbCGDNIH1_0913"/>
<dbReference type="eggNOG" id="COG1117">
    <property type="taxonomic scope" value="Bacteria"/>
</dbReference>
<dbReference type="HOGENOM" id="CLU_000604_1_22_5"/>
<dbReference type="Proteomes" id="UP000001963">
    <property type="component" value="Chromosome"/>
</dbReference>
<dbReference type="GO" id="GO:0005886">
    <property type="term" value="C:plasma membrane"/>
    <property type="evidence" value="ECO:0007669"/>
    <property type="project" value="UniProtKB-SubCell"/>
</dbReference>
<dbReference type="GO" id="GO:0005524">
    <property type="term" value="F:ATP binding"/>
    <property type="evidence" value="ECO:0007669"/>
    <property type="project" value="UniProtKB-KW"/>
</dbReference>
<dbReference type="GO" id="GO:0016887">
    <property type="term" value="F:ATP hydrolysis activity"/>
    <property type="evidence" value="ECO:0007669"/>
    <property type="project" value="InterPro"/>
</dbReference>
<dbReference type="GO" id="GO:0015415">
    <property type="term" value="F:ATPase-coupled phosphate ion transmembrane transporter activity"/>
    <property type="evidence" value="ECO:0007669"/>
    <property type="project" value="UniProtKB-EC"/>
</dbReference>
<dbReference type="GO" id="GO:0035435">
    <property type="term" value="P:phosphate ion transmembrane transport"/>
    <property type="evidence" value="ECO:0007669"/>
    <property type="project" value="InterPro"/>
</dbReference>
<dbReference type="CDD" id="cd03260">
    <property type="entry name" value="ABC_PstB_phosphate_transporter"/>
    <property type="match status" value="1"/>
</dbReference>
<dbReference type="FunFam" id="3.40.50.300:FF:000132">
    <property type="entry name" value="Phosphate import ATP-binding protein PstB"/>
    <property type="match status" value="1"/>
</dbReference>
<dbReference type="Gene3D" id="3.40.50.300">
    <property type="entry name" value="P-loop containing nucleotide triphosphate hydrolases"/>
    <property type="match status" value="1"/>
</dbReference>
<dbReference type="InterPro" id="IPR003593">
    <property type="entry name" value="AAA+_ATPase"/>
</dbReference>
<dbReference type="InterPro" id="IPR003439">
    <property type="entry name" value="ABC_transporter-like_ATP-bd"/>
</dbReference>
<dbReference type="InterPro" id="IPR017871">
    <property type="entry name" value="ABC_transporter-like_CS"/>
</dbReference>
<dbReference type="InterPro" id="IPR027417">
    <property type="entry name" value="P-loop_NTPase"/>
</dbReference>
<dbReference type="InterPro" id="IPR005670">
    <property type="entry name" value="PstB-like"/>
</dbReference>
<dbReference type="NCBIfam" id="TIGR00972">
    <property type="entry name" value="3a0107s01c2"/>
    <property type="match status" value="1"/>
</dbReference>
<dbReference type="PANTHER" id="PTHR43423">
    <property type="entry name" value="ABC TRANSPORTER I FAMILY MEMBER 17"/>
    <property type="match status" value="1"/>
</dbReference>
<dbReference type="PANTHER" id="PTHR43423:SF3">
    <property type="entry name" value="PHOSPHATE IMPORT ATP-BINDING PROTEIN PSTB"/>
    <property type="match status" value="1"/>
</dbReference>
<dbReference type="Pfam" id="PF00005">
    <property type="entry name" value="ABC_tran"/>
    <property type="match status" value="1"/>
</dbReference>
<dbReference type="SMART" id="SM00382">
    <property type="entry name" value="AAA"/>
    <property type="match status" value="1"/>
</dbReference>
<dbReference type="SUPFAM" id="SSF52540">
    <property type="entry name" value="P-loop containing nucleoside triphosphate hydrolases"/>
    <property type="match status" value="1"/>
</dbReference>
<dbReference type="PROSITE" id="PS00211">
    <property type="entry name" value="ABC_TRANSPORTER_1"/>
    <property type="match status" value="1"/>
</dbReference>
<dbReference type="PROSITE" id="PS50893">
    <property type="entry name" value="ABC_TRANSPORTER_2"/>
    <property type="match status" value="1"/>
</dbReference>
<dbReference type="PROSITE" id="PS51238">
    <property type="entry name" value="PSTB"/>
    <property type="match status" value="1"/>
</dbReference>
<gene>
    <name evidence="1" type="primary">pstB</name>
    <name type="ordered locus">GbCGDNIH1_0913</name>
</gene>
<sequence>MVSTVSQVSRTASHDAGGSAAAGLAAMAASRVMVESQPKIAVRNLDFYYGSHKALKSISLDVHERQVLGMIGPSGCGKSTLLRILNKMYALYPGQRAEGEVLLDGENVLGKDVDVNVLRSRVGMVFQKPTPFPMSIYENIAFGIRLHEKLSKAEMDERIEWSLTRAALWSEVKDRLHTAAAGMSGGQQQRLCIARTIAVKPEVILLDEPTSALDPISTLKIEELVDELKRDFTIAIVTHNMQQAARCADRVAFFYMGELVEVGTALDMFTNPREQRTQEYITGRFG</sequence>
<protein>
    <recommendedName>
        <fullName evidence="1">Phosphate import ATP-binding protein PstB</fullName>
        <ecNumber evidence="1">7.3.2.1</ecNumber>
    </recommendedName>
    <alternativeName>
        <fullName evidence="1">ABC phosphate transporter</fullName>
    </alternativeName>
    <alternativeName>
        <fullName evidence="1">Phosphate-transporting ATPase</fullName>
    </alternativeName>
</protein>
<comment type="function">
    <text evidence="1">Part of the ABC transporter complex PstSACB involved in phosphate import. Responsible for energy coupling to the transport system.</text>
</comment>
<comment type="catalytic activity">
    <reaction evidence="1">
        <text>phosphate(out) + ATP + H2O = ADP + 2 phosphate(in) + H(+)</text>
        <dbReference type="Rhea" id="RHEA:24440"/>
        <dbReference type="ChEBI" id="CHEBI:15377"/>
        <dbReference type="ChEBI" id="CHEBI:15378"/>
        <dbReference type="ChEBI" id="CHEBI:30616"/>
        <dbReference type="ChEBI" id="CHEBI:43474"/>
        <dbReference type="ChEBI" id="CHEBI:456216"/>
        <dbReference type="EC" id="7.3.2.1"/>
    </reaction>
</comment>
<comment type="subunit">
    <text evidence="1">The complex is composed of two ATP-binding proteins (PstB), two transmembrane proteins (PstC and PstA) and a solute-binding protein (PstS).</text>
</comment>
<comment type="subcellular location">
    <subcellularLocation>
        <location evidence="1">Cell inner membrane</location>
        <topology evidence="1">Peripheral membrane protein</topology>
    </subcellularLocation>
</comment>
<comment type="similarity">
    <text evidence="1">Belongs to the ABC transporter superfamily. Phosphate importer (TC 3.A.1.7) family.</text>
</comment>
<reference key="1">
    <citation type="journal article" date="2007" name="J. Bacteriol.">
        <title>Genome sequence analysis of the emerging human pathogenic acetic acid bacterium Granulibacter bethesdensis.</title>
        <authorList>
            <person name="Greenberg D.E."/>
            <person name="Porcella S.F."/>
            <person name="Zelazny A.M."/>
            <person name="Virtaneva K."/>
            <person name="Sturdevant D.E."/>
            <person name="Kupko J.J. III"/>
            <person name="Barbian K.D."/>
            <person name="Babar A."/>
            <person name="Dorward D.W."/>
            <person name="Holland S.M."/>
        </authorList>
    </citation>
    <scope>NUCLEOTIDE SEQUENCE [LARGE SCALE GENOMIC DNA]</scope>
    <source>
        <strain>ATCC BAA-1260 / CGDNIH1</strain>
    </source>
</reference>
<name>PSTB_GRABC</name>
<feature type="chain" id="PRO_0000272458" description="Phosphate import ATP-binding protein PstB">
    <location>
        <begin position="1"/>
        <end position="286"/>
    </location>
</feature>
<feature type="domain" description="ABC transporter" evidence="1">
    <location>
        <begin position="40"/>
        <end position="281"/>
    </location>
</feature>
<feature type="binding site" evidence="1">
    <location>
        <begin position="72"/>
        <end position="79"/>
    </location>
    <ligand>
        <name>ATP</name>
        <dbReference type="ChEBI" id="CHEBI:30616"/>
    </ligand>
</feature>
<evidence type="ECO:0000255" key="1">
    <source>
        <dbReference type="HAMAP-Rule" id="MF_01702"/>
    </source>
</evidence>
<accession>Q0BTP1</accession>